<sequence>MVNRDNSIVALSFFMLFLLVLHLHFETTTAARKPVRVFGPPSSIEWSPPSPPKDDFEWFEINIYKNIEQTAFRPTGQGPSQGIGHKDPPGAP</sequence>
<reference key="1">
    <citation type="journal article" date="2000" name="Nature">
        <title>Sequence and analysis of chromosome 1 of the plant Arabidopsis thaliana.</title>
        <authorList>
            <person name="Theologis A."/>
            <person name="Ecker J.R."/>
            <person name="Palm C.J."/>
            <person name="Federspiel N.A."/>
            <person name="Kaul S."/>
            <person name="White O."/>
            <person name="Alonso J."/>
            <person name="Altafi H."/>
            <person name="Araujo R."/>
            <person name="Bowman C.L."/>
            <person name="Brooks S.Y."/>
            <person name="Buehler E."/>
            <person name="Chan A."/>
            <person name="Chao Q."/>
            <person name="Chen H."/>
            <person name="Cheuk R.F."/>
            <person name="Chin C.W."/>
            <person name="Chung M.K."/>
            <person name="Conn L."/>
            <person name="Conway A.B."/>
            <person name="Conway A.R."/>
            <person name="Creasy T.H."/>
            <person name="Dewar K."/>
            <person name="Dunn P."/>
            <person name="Etgu P."/>
            <person name="Feldblyum T.V."/>
            <person name="Feng J.-D."/>
            <person name="Fong B."/>
            <person name="Fujii C.Y."/>
            <person name="Gill J.E."/>
            <person name="Goldsmith A.D."/>
            <person name="Haas B."/>
            <person name="Hansen N.F."/>
            <person name="Hughes B."/>
            <person name="Huizar L."/>
            <person name="Hunter J.L."/>
            <person name="Jenkins J."/>
            <person name="Johnson-Hopson C."/>
            <person name="Khan S."/>
            <person name="Khaykin E."/>
            <person name="Kim C.J."/>
            <person name="Koo H.L."/>
            <person name="Kremenetskaia I."/>
            <person name="Kurtz D.B."/>
            <person name="Kwan A."/>
            <person name="Lam B."/>
            <person name="Langin-Hooper S."/>
            <person name="Lee A."/>
            <person name="Lee J.M."/>
            <person name="Lenz C.A."/>
            <person name="Li J.H."/>
            <person name="Li Y.-P."/>
            <person name="Lin X."/>
            <person name="Liu S.X."/>
            <person name="Liu Z.A."/>
            <person name="Luros J.S."/>
            <person name="Maiti R."/>
            <person name="Marziali A."/>
            <person name="Militscher J."/>
            <person name="Miranda M."/>
            <person name="Nguyen M."/>
            <person name="Nierman W.C."/>
            <person name="Osborne B.I."/>
            <person name="Pai G."/>
            <person name="Peterson J."/>
            <person name="Pham P.K."/>
            <person name="Rizzo M."/>
            <person name="Rooney T."/>
            <person name="Rowley D."/>
            <person name="Sakano H."/>
            <person name="Salzberg S.L."/>
            <person name="Schwartz J.R."/>
            <person name="Shinn P."/>
            <person name="Southwick A.M."/>
            <person name="Sun H."/>
            <person name="Tallon L.J."/>
            <person name="Tambunga G."/>
            <person name="Toriumi M.J."/>
            <person name="Town C.D."/>
            <person name="Utterback T."/>
            <person name="Van Aken S."/>
            <person name="Vaysberg M."/>
            <person name="Vysotskaia V.S."/>
            <person name="Walker M."/>
            <person name="Wu D."/>
            <person name="Yu G."/>
            <person name="Fraser C.M."/>
            <person name="Venter J.C."/>
            <person name="Davis R.W."/>
        </authorList>
    </citation>
    <scope>NUCLEOTIDE SEQUENCE [LARGE SCALE GENOMIC DNA]</scope>
    <source>
        <strain>cv. Columbia</strain>
    </source>
</reference>
<reference key="2">
    <citation type="journal article" date="2017" name="Plant J.">
        <title>Araport11: a complete reannotation of the Arabidopsis thaliana reference genome.</title>
        <authorList>
            <person name="Cheng C.Y."/>
            <person name="Krishnakumar V."/>
            <person name="Chan A.P."/>
            <person name="Thibaud-Nissen F."/>
            <person name="Schobel S."/>
            <person name="Town C.D."/>
        </authorList>
    </citation>
    <scope>GENOME REANNOTATION</scope>
    <source>
        <strain>cv. Columbia</strain>
    </source>
</reference>
<reference key="3">
    <citation type="journal article" date="2013" name="J. Exp. Bot.">
        <title>The CEP family in land plants: evolutionary analyses, expression studies, and role in Arabidopsis shoot development.</title>
        <authorList>
            <person name="Roberts I."/>
            <person name="Smith S."/>
            <person name="De Rybel B."/>
            <person name="Van Den Broeke J."/>
            <person name="Smet W."/>
            <person name="De Cokere S."/>
            <person name="Mispelaere M."/>
            <person name="De Smet I."/>
            <person name="Beeckman T."/>
        </authorList>
    </citation>
    <scope>INDUCTION BY JASMONIC ACID</scope>
    <scope>GENE FAMILY</scope>
    <source>
        <strain>cv. Columbia</strain>
    </source>
</reference>
<reference key="4">
    <citation type="journal article" date="2013" name="J. Exp. Bot.">
        <title>CEP genes regulate root and shoot development in response to environmental cues and are specific to seed plants.</title>
        <authorList>
            <person name="Delay C."/>
            <person name="Imin N."/>
            <person name="Djordjevic M.A."/>
        </authorList>
    </citation>
    <scope>GENE FAMILY</scope>
    <scope>NOMENCLATURE</scope>
    <source>
        <strain>cv. Columbia</strain>
    </source>
</reference>
<name>PCP12_ARATH</name>
<evidence type="ECO:0000250" key="1">
    <source>
        <dbReference type="UniProtKB" id="O80460"/>
    </source>
</evidence>
<evidence type="ECO:0000250" key="2">
    <source>
        <dbReference type="UniProtKB" id="Q058G9"/>
    </source>
</evidence>
<evidence type="ECO:0000250" key="3">
    <source>
        <dbReference type="UniProtKB" id="Q8L8Y3"/>
    </source>
</evidence>
<evidence type="ECO:0000255" key="4"/>
<evidence type="ECO:0000256" key="5">
    <source>
        <dbReference type="SAM" id="MobiDB-lite"/>
    </source>
</evidence>
<evidence type="ECO:0000269" key="6">
    <source>
    </source>
</evidence>
<evidence type="ECO:0000303" key="7">
    <source>
    </source>
</evidence>
<evidence type="ECO:0000305" key="8"/>
<evidence type="ECO:0000312" key="9">
    <source>
        <dbReference type="Araport" id="AT1G31670"/>
    </source>
</evidence>
<evidence type="ECO:0000312" key="10">
    <source>
        <dbReference type="EMBL" id="AAG60154.1"/>
    </source>
</evidence>
<comment type="function">
    <text evidence="3">Extracellular signaling peptide that may regulate primary root growth rate and systemic nitrogen (N)-demand signaling.</text>
</comment>
<comment type="subunit">
    <text evidence="3">Interacts with CEP receptors (e.g. CEPR1 and CEPR2).</text>
</comment>
<comment type="subcellular location">
    <molecule>C-terminally encoded peptide 12</molecule>
    <subcellularLocation>
        <location evidence="1">Secreted</location>
        <location evidence="1">Extracellular space</location>
        <location evidence="1">Apoplast</location>
    </subcellularLocation>
    <text evidence="1">Accumulates in xylem sap.</text>
</comment>
<comment type="induction">
    <text evidence="6">Induced by jasmonic acid (JA).</text>
</comment>
<comment type="PTM">
    <text evidence="3">The mature small signaling peptide is generated by proteolytic processing of the longer precursor.</text>
</comment>
<comment type="similarity">
    <text evidence="8">Belongs to the C-terminally encoded plant signaling peptide (CEP) family.</text>
</comment>
<comment type="sequence caution" evidence="8">
    <conflict type="erroneous gene model prediction">
        <sequence resource="EMBL-CDS" id="AAG60154"/>
    </conflict>
    <text>The predicted gene At1g31670 has been split into 2 genes: At1g31670 and At1g31672.</text>
</comment>
<comment type="sequence caution" evidence="8">
    <conflict type="erroneous gene model prediction">
        <sequence resource="EMBL-CDS" id="AEE31382"/>
    </conflict>
    <text>The predicted gene At1g31670 has been split into 2 genes: At1g31670 and At1g31672.</text>
</comment>
<feature type="signal peptide" evidence="4">
    <location>
        <begin position="1"/>
        <end position="30"/>
    </location>
</feature>
<feature type="propeptide" id="PRO_0000440007" evidence="8">
    <location>
        <begin position="31"/>
        <end position="70"/>
    </location>
</feature>
<feature type="peptide" id="PRO_0000440008" description="C-terminally encoded peptide 12" evidence="2">
    <location>
        <begin position="71"/>
        <end position="85"/>
    </location>
</feature>
<feature type="propeptide" id="PRO_0000440009" evidence="8">
    <location>
        <begin position="86"/>
        <end position="92"/>
    </location>
</feature>
<feature type="region of interest" description="Disordered" evidence="5">
    <location>
        <begin position="70"/>
        <end position="92"/>
    </location>
</feature>
<feature type="modified residue" description="Hydroxyproline" evidence="3">
    <location>
        <position position="74"/>
    </location>
</feature>
<feature type="modified residue" description="Hydroxyproline" evidence="2">
    <location>
        <position position="79"/>
    </location>
</feature>
<accession>P0DN99</accession>
<accession>Q9C6V7</accession>
<dbReference type="EMBL" id="AC074360">
    <property type="protein sequence ID" value="AAG60154.1"/>
    <property type="status" value="ALT_SEQ"/>
    <property type="molecule type" value="Genomic_DNA"/>
</dbReference>
<dbReference type="EMBL" id="CP002684">
    <property type="protein sequence ID" value="AEE31382.1"/>
    <property type="status" value="ALT_SEQ"/>
    <property type="molecule type" value="Genomic_DNA"/>
</dbReference>
<dbReference type="RefSeq" id="NP_174448.1">
    <property type="nucleotide sequence ID" value="NM_102902.2"/>
</dbReference>
<dbReference type="SMR" id="P0DN99"/>
<dbReference type="FunCoup" id="P0DN99">
    <property type="interactions" value="99"/>
</dbReference>
<dbReference type="STRING" id="3702.P0DN99"/>
<dbReference type="GeneID" id="840054"/>
<dbReference type="KEGG" id="ath:AT1G31670"/>
<dbReference type="Araport" id="AT1G31670"/>
<dbReference type="TAIR" id="AT1G31670"/>
<dbReference type="InParanoid" id="P0DN99"/>
<dbReference type="PRO" id="PR:P0DN99"/>
<dbReference type="Proteomes" id="UP000006548">
    <property type="component" value="Chromosome 1"/>
</dbReference>
<dbReference type="ExpressionAtlas" id="P0DN99">
    <property type="expression patterns" value="baseline and differential"/>
</dbReference>
<dbReference type="GO" id="GO:0048046">
    <property type="term" value="C:apoplast"/>
    <property type="evidence" value="ECO:0000250"/>
    <property type="project" value="UniProtKB"/>
</dbReference>
<dbReference type="GO" id="GO:0005179">
    <property type="term" value="F:hormone activity"/>
    <property type="evidence" value="ECO:0000250"/>
    <property type="project" value="UniProtKB"/>
</dbReference>
<dbReference type="GO" id="GO:1902025">
    <property type="term" value="P:nitrate import"/>
    <property type="evidence" value="ECO:0000250"/>
    <property type="project" value="UniProtKB"/>
</dbReference>
<dbReference type="GO" id="GO:2000280">
    <property type="term" value="P:regulation of root development"/>
    <property type="evidence" value="ECO:0000250"/>
    <property type="project" value="UniProtKB"/>
</dbReference>
<dbReference type="GO" id="GO:0009753">
    <property type="term" value="P:response to jasmonic acid"/>
    <property type="evidence" value="ECO:0000270"/>
    <property type="project" value="UniProtKB"/>
</dbReference>
<keyword id="KW-0052">Apoplast</keyword>
<keyword id="KW-0217">Developmental protein</keyword>
<keyword id="KW-0372">Hormone</keyword>
<keyword id="KW-0379">Hydroxylation</keyword>
<keyword id="KW-1185">Reference proteome</keyword>
<keyword id="KW-0964">Secreted</keyword>
<keyword id="KW-0732">Signal</keyword>
<proteinExistence type="evidence at transcript level"/>
<organism>
    <name type="scientific">Arabidopsis thaliana</name>
    <name type="common">Mouse-ear cress</name>
    <dbReference type="NCBI Taxonomy" id="3702"/>
    <lineage>
        <taxon>Eukaryota</taxon>
        <taxon>Viridiplantae</taxon>
        <taxon>Streptophyta</taxon>
        <taxon>Embryophyta</taxon>
        <taxon>Tracheophyta</taxon>
        <taxon>Spermatophyta</taxon>
        <taxon>Magnoliopsida</taxon>
        <taxon>eudicotyledons</taxon>
        <taxon>Gunneridae</taxon>
        <taxon>Pentapetalae</taxon>
        <taxon>rosids</taxon>
        <taxon>malvids</taxon>
        <taxon>Brassicales</taxon>
        <taxon>Brassicaceae</taxon>
        <taxon>Camelineae</taxon>
        <taxon>Arabidopsis</taxon>
    </lineage>
</organism>
<protein>
    <recommendedName>
        <fullName evidence="7">Precursor of CEP12</fullName>
        <shortName evidence="7">PCEP12</shortName>
    </recommendedName>
    <component>
        <recommendedName>
            <fullName evidence="7">C-terminally encoded peptide 12</fullName>
            <shortName evidence="7">CEP12</shortName>
        </recommendedName>
    </component>
</protein>
<gene>
    <name evidence="7" type="primary">CEP12</name>
    <name evidence="9" type="ordered locus">At1g31670</name>
    <name evidence="10" type="ORF">F27M3.13</name>
</gene>